<comment type="function">
    <text evidence="1 3">Probable cyclase; part of the gene cluster that mediates the biosynthesis of the tetraketides fugralins such as linear fugralin A and cyclic fugralin B, volatile compounds that play a role in the asexual reproductive cycle but are not involved in pathogenicity (PubMed:38025899). Fugralin B is similar to fugralin A except for a cyclization between the carboxylic acid C-8 and the alcohol on C-4 resulting in a six membered lactone ring, probably catalyzed by the cyclase FGR4 (Probable). One of the key features of fugralins is the presence of a double methyl group, which is only rarely encountered in fungal secondary metabolites. As the fugralins cluster does not contain an independent methyltransferase, the PKS FGR1 is probably responsible for adding two methyl groups to the same carbon atom (Probable). The exact role of the individual cluster genes remains unknown and further work is needed to unravel the biosynthetic pathway (Probable).</text>
</comment>
<comment type="pathway">
    <text evidence="3">Secondary metabolite biosynthesis.</text>
</comment>
<reference key="1">
    <citation type="journal article" date="2007" name="Science">
        <title>The Fusarium graminearum genome reveals a link between localized polymorphism and pathogen specialization.</title>
        <authorList>
            <person name="Cuomo C.A."/>
            <person name="Gueldener U."/>
            <person name="Xu J.-R."/>
            <person name="Trail F."/>
            <person name="Turgeon B.G."/>
            <person name="Di Pietro A."/>
            <person name="Walton J.D."/>
            <person name="Ma L.-J."/>
            <person name="Baker S.E."/>
            <person name="Rep M."/>
            <person name="Adam G."/>
            <person name="Antoniw J."/>
            <person name="Baldwin T."/>
            <person name="Calvo S.E."/>
            <person name="Chang Y.-L."/>
            <person name="DeCaprio D."/>
            <person name="Gale L.R."/>
            <person name="Gnerre S."/>
            <person name="Goswami R.S."/>
            <person name="Hammond-Kosack K."/>
            <person name="Harris L.J."/>
            <person name="Hilburn K."/>
            <person name="Kennell J.C."/>
            <person name="Kroken S."/>
            <person name="Magnuson J.K."/>
            <person name="Mannhaupt G."/>
            <person name="Mauceli E.W."/>
            <person name="Mewes H.-W."/>
            <person name="Mitterbauer R."/>
            <person name="Muehlbauer G."/>
            <person name="Muensterkoetter M."/>
            <person name="Nelson D."/>
            <person name="O'Donnell K."/>
            <person name="Ouellet T."/>
            <person name="Qi W."/>
            <person name="Quesneville H."/>
            <person name="Roncero M.I.G."/>
            <person name="Seong K.-Y."/>
            <person name="Tetko I.V."/>
            <person name="Urban M."/>
            <person name="Waalwijk C."/>
            <person name="Ward T.J."/>
            <person name="Yao J."/>
            <person name="Birren B.W."/>
            <person name="Kistler H.C."/>
        </authorList>
    </citation>
    <scope>NUCLEOTIDE SEQUENCE [LARGE SCALE GENOMIC DNA]</scope>
    <source>
        <strain>ATCC MYA-4620 / CBS 123657 / FGSC 9075 / NRRL 31084 / PH-1</strain>
    </source>
</reference>
<reference key="2">
    <citation type="journal article" date="2010" name="Nature">
        <title>Comparative genomics reveals mobile pathogenicity chromosomes in Fusarium.</title>
        <authorList>
            <person name="Ma L.-J."/>
            <person name="van der Does H.C."/>
            <person name="Borkovich K.A."/>
            <person name="Coleman J.J."/>
            <person name="Daboussi M.-J."/>
            <person name="Di Pietro A."/>
            <person name="Dufresne M."/>
            <person name="Freitag M."/>
            <person name="Grabherr M."/>
            <person name="Henrissat B."/>
            <person name="Houterman P.M."/>
            <person name="Kang S."/>
            <person name="Shim W.-B."/>
            <person name="Woloshuk C."/>
            <person name="Xie X."/>
            <person name="Xu J.-R."/>
            <person name="Antoniw J."/>
            <person name="Baker S.E."/>
            <person name="Bluhm B.H."/>
            <person name="Breakspear A."/>
            <person name="Brown D.W."/>
            <person name="Butchko R.A.E."/>
            <person name="Chapman S."/>
            <person name="Coulson R."/>
            <person name="Coutinho P.M."/>
            <person name="Danchin E.G.J."/>
            <person name="Diener A."/>
            <person name="Gale L.R."/>
            <person name="Gardiner D.M."/>
            <person name="Goff S."/>
            <person name="Hammond-Kosack K.E."/>
            <person name="Hilburn K."/>
            <person name="Hua-Van A."/>
            <person name="Jonkers W."/>
            <person name="Kazan K."/>
            <person name="Kodira C.D."/>
            <person name="Koehrsen M."/>
            <person name="Kumar L."/>
            <person name="Lee Y.-H."/>
            <person name="Li L."/>
            <person name="Manners J.M."/>
            <person name="Miranda-Saavedra D."/>
            <person name="Mukherjee M."/>
            <person name="Park G."/>
            <person name="Park J."/>
            <person name="Park S.-Y."/>
            <person name="Proctor R.H."/>
            <person name="Regev A."/>
            <person name="Ruiz-Roldan M.C."/>
            <person name="Sain D."/>
            <person name="Sakthikumar S."/>
            <person name="Sykes S."/>
            <person name="Schwartz D.C."/>
            <person name="Turgeon B.G."/>
            <person name="Wapinski I."/>
            <person name="Yoder O."/>
            <person name="Young S."/>
            <person name="Zeng Q."/>
            <person name="Zhou S."/>
            <person name="Galagan J."/>
            <person name="Cuomo C.A."/>
            <person name="Kistler H.C."/>
            <person name="Rep M."/>
        </authorList>
    </citation>
    <scope>GENOME REANNOTATION</scope>
    <source>
        <strain>ATCC MYA-4620 / CBS 123657 / FGSC 9075 / NRRL 31084 / PH-1</strain>
    </source>
</reference>
<reference key="3">
    <citation type="journal article" date="2015" name="BMC Genomics">
        <title>The completed genome sequence of the pathogenic ascomycete fungus Fusarium graminearum.</title>
        <authorList>
            <person name="King R."/>
            <person name="Urban M."/>
            <person name="Hammond-Kosack M.C.U."/>
            <person name="Hassani-Pak K."/>
            <person name="Hammond-Kosack K.E."/>
        </authorList>
    </citation>
    <scope>NUCLEOTIDE SEQUENCE [LARGE SCALE GENOMIC DNA]</scope>
    <source>
        <strain>ATCC MYA-4620 / CBS 123657 / FGSC 9075 / NRRL 31084 / PH-1</strain>
    </source>
</reference>
<reference key="4">
    <citation type="journal article" date="2023" name="Front. Fungal Biol.">
        <title>Filling out the gaps - identification of fugralins as products of the PKS2 cluster in Fusarium graminearum.</title>
        <authorList>
            <person name="Severinsen M.M."/>
            <person name="Westphal K.R."/>
            <person name="Terp M."/>
            <person name="Soerensen T."/>
            <person name="Olsen A."/>
            <person name="Bachleitner S."/>
            <person name="Studt-Reinhold L."/>
            <person name="Wimmer R."/>
            <person name="Sondergaard T.E."/>
            <person name="Soerensen J.L."/>
        </authorList>
    </citation>
    <scope>FUNCTION</scope>
    <scope>PATHWAY</scope>
</reference>
<sequence length="150" mass="17158">MAVSPEAAAIIQRKKAQYCRFADSNQWDRFDSIMLPSATFLFHNPDGSVITKGDIEYSWSSTKDWVAFFENEFKTMQTIHILGPAEMGQIAPDEIKAIWAVTYHAGTKEHQGGVHGTGGGHYHETWKKVGDDWFMESLRMERLYWKLLSV</sequence>
<proteinExistence type="predicted"/>
<feature type="chain" id="PRO_0000460590" description="Probable cyclase FGR4">
    <location>
        <begin position="1"/>
        <end position="150"/>
    </location>
</feature>
<gene>
    <name evidence="2" type="primary">FGR4</name>
    <name type="ORF">FGRAMPH1_01T16079</name>
</gene>
<accession>I1S6W0</accession>
<organism>
    <name type="scientific">Gibberella zeae (strain ATCC MYA-4620 / CBS 123657 / FGSC 9075 / NRRL 31084 / PH-1)</name>
    <name type="common">Wheat head blight fungus</name>
    <name type="synonym">Fusarium graminearum</name>
    <dbReference type="NCBI Taxonomy" id="229533"/>
    <lineage>
        <taxon>Eukaryota</taxon>
        <taxon>Fungi</taxon>
        <taxon>Dikarya</taxon>
        <taxon>Ascomycota</taxon>
        <taxon>Pezizomycotina</taxon>
        <taxon>Sordariomycetes</taxon>
        <taxon>Hypocreomycetidae</taxon>
        <taxon>Hypocreales</taxon>
        <taxon>Nectriaceae</taxon>
        <taxon>Fusarium</taxon>
    </lineage>
</organism>
<dbReference type="EC" id="4.2.1.-" evidence="3"/>
<dbReference type="EMBL" id="HG970334">
    <property type="protein sequence ID" value="CEF87720.1"/>
    <property type="molecule type" value="Genomic_DNA"/>
</dbReference>
<dbReference type="RefSeq" id="XP_011323123.1">
    <property type="nucleotide sequence ID" value="XM_011324821.1"/>
</dbReference>
<dbReference type="SMR" id="I1S6W0"/>
<dbReference type="KEGG" id="fgr:FGSG_12583"/>
<dbReference type="VEuPathDB" id="FungiDB:FGRAMPH1_01G16079"/>
<dbReference type="eggNOG" id="ENOG502SVFZ">
    <property type="taxonomic scope" value="Eukaryota"/>
</dbReference>
<dbReference type="HOGENOM" id="CLU_106738_11_0_1"/>
<dbReference type="InParanoid" id="I1S6W0"/>
<dbReference type="OrthoDB" id="9025at110618"/>
<dbReference type="Proteomes" id="UP000070720">
    <property type="component" value="Chromosome 3"/>
</dbReference>
<dbReference type="GO" id="GO:0016829">
    <property type="term" value="F:lyase activity"/>
    <property type="evidence" value="ECO:0007669"/>
    <property type="project" value="UniProtKB-KW"/>
</dbReference>
<dbReference type="Gene3D" id="3.10.450.50">
    <property type="match status" value="1"/>
</dbReference>
<dbReference type="InterPro" id="IPR032710">
    <property type="entry name" value="NTF2-like_dom_sf"/>
</dbReference>
<dbReference type="InterPro" id="IPR037401">
    <property type="entry name" value="SnoaL-like"/>
</dbReference>
<dbReference type="Pfam" id="PF13577">
    <property type="entry name" value="SnoaL_4"/>
    <property type="match status" value="1"/>
</dbReference>
<dbReference type="SUPFAM" id="SSF54427">
    <property type="entry name" value="NTF2-like"/>
    <property type="match status" value="1"/>
</dbReference>
<evidence type="ECO:0000269" key="1">
    <source>
    </source>
</evidence>
<evidence type="ECO:0000303" key="2">
    <source>
    </source>
</evidence>
<evidence type="ECO:0000305" key="3">
    <source>
    </source>
</evidence>
<protein>
    <recommendedName>
        <fullName evidence="2">Probable cyclase FGR4</fullName>
        <ecNumber evidence="3">4.2.1.-</ecNumber>
    </recommendedName>
    <alternativeName>
        <fullName evidence="2">Fugralins biosynthesis cluster protein 4</fullName>
    </alternativeName>
</protein>
<keyword id="KW-0456">Lyase</keyword>
<keyword id="KW-1185">Reference proteome</keyword>
<name>FGR4_GIBZE</name>